<sequence>QVWYDREVTAFVEPG</sequence>
<feature type="chain" id="PRO_0000055512" description="Unknown protein from spot 308 of 2D-PAGE of etiolated coleoptile">
    <location>
        <begin position="1" status="less than"/>
        <end position="15" status="greater than"/>
    </location>
</feature>
<feature type="non-terminal residue">
    <location>
        <position position="1"/>
    </location>
</feature>
<feature type="non-terminal residue">
    <location>
        <position position="15"/>
    </location>
</feature>
<comment type="miscellaneous">
    <text>On the 2D-gel the determined pI of this unknown protein is: 5.9, its MW is: 18.6 kDa.</text>
</comment>
<dbReference type="MaizeGDB" id="123948"/>
<dbReference type="InParanoid" id="P80622"/>
<dbReference type="Proteomes" id="UP000007305">
    <property type="component" value="Unplaced"/>
</dbReference>
<reference key="1">
    <citation type="journal article" date="1996" name="Theor. Appl. Genet.">
        <title>The maize two dimensional gel protein database: towards an integrated genome analysis program.</title>
        <authorList>
            <person name="Touzet P."/>
            <person name="Riccardi F."/>
            <person name="Morin C."/>
            <person name="Damerval C."/>
            <person name="Huet J.-C."/>
            <person name="Pernollet J.-C."/>
            <person name="Zivy M."/>
            <person name="de Vienne D."/>
        </authorList>
        <dbReference type="AGRICOLA" id="IND20551642"/>
    </citation>
    <scope>PROTEIN SEQUENCE</scope>
    <source>
        <tissue>Coleoptile</tissue>
    </source>
</reference>
<organism>
    <name type="scientific">Zea mays</name>
    <name type="common">Maize</name>
    <dbReference type="NCBI Taxonomy" id="4577"/>
    <lineage>
        <taxon>Eukaryota</taxon>
        <taxon>Viridiplantae</taxon>
        <taxon>Streptophyta</taxon>
        <taxon>Embryophyta</taxon>
        <taxon>Tracheophyta</taxon>
        <taxon>Spermatophyta</taxon>
        <taxon>Magnoliopsida</taxon>
        <taxon>Liliopsida</taxon>
        <taxon>Poales</taxon>
        <taxon>Poaceae</taxon>
        <taxon>PACMAD clade</taxon>
        <taxon>Panicoideae</taxon>
        <taxon>Andropogonodae</taxon>
        <taxon>Andropogoneae</taxon>
        <taxon>Tripsacinae</taxon>
        <taxon>Zea</taxon>
    </lineage>
</organism>
<accession>P80622</accession>
<name>UC16_MAIZE</name>
<proteinExistence type="evidence at protein level"/>
<protein>
    <recommendedName>
        <fullName>Unknown protein from spot 308 of 2D-PAGE of etiolated coleoptile</fullName>
    </recommendedName>
</protein>
<keyword id="KW-0903">Direct protein sequencing</keyword>
<keyword id="KW-1185">Reference proteome</keyword>